<comment type="similarity">
    <text evidence="1">Belongs to the iron-sulfur cluster assembly SufBD family.</text>
</comment>
<name>Y1497_MYCBO</name>
<sequence>MTAPGLTAAVEGIAHNKGELFASFDVDAFEVPHGRDEIWRFTPLRRLRGLHDGSARATGSATITVSERPGVYTQTVRRGDPRLGEGGVPTDRVAAQAFSSFNSATLVTVERDTQVVEPVGITVTGPGEGAVAYGHLQVRIEELGEAVVVIDHRGGGTYADNVEFVVDDAARLTAVWIADWADDTVHLSAHHARIGKDAVLRHVTVMLGGDVVRMSAGVRFCGAGGDAELLGLYFADDGQHLESRLLVDHAHPDCKSNVLYKGALQGDPASSLPDAHTVWVGDVLIRAQATGTDTFEVNRNLVLTDGARADSVPNLEIETGEIVGAGHASATGRFDDEQLFYLRSRGIPEAQARRLVVRGFFGEIIAKIAVPEVRERLTAAIEHELEITESTEKTTVS</sequence>
<gene>
    <name type="ordered locus">BQ2027_MB1497</name>
</gene>
<organism>
    <name type="scientific">Mycobacterium bovis (strain ATCC BAA-935 / AF2122/97)</name>
    <dbReference type="NCBI Taxonomy" id="233413"/>
    <lineage>
        <taxon>Bacteria</taxon>
        <taxon>Bacillati</taxon>
        <taxon>Actinomycetota</taxon>
        <taxon>Actinomycetes</taxon>
        <taxon>Mycobacteriales</taxon>
        <taxon>Mycobacteriaceae</taxon>
        <taxon>Mycobacterium</taxon>
        <taxon>Mycobacterium tuberculosis complex</taxon>
    </lineage>
</organism>
<protein>
    <recommendedName>
        <fullName>Iron-sulfur cluster assembly SufBD family protein Mb1497</fullName>
    </recommendedName>
</protein>
<feature type="chain" id="PRO_0000147384" description="Iron-sulfur cluster assembly SufBD family protein Mb1497">
    <location>
        <begin position="1"/>
        <end position="397"/>
    </location>
</feature>
<accession>P59973</accession>
<accession>A0A1R3XYF4</accession>
<accession>X2BIH2</accession>
<keyword id="KW-1185">Reference proteome</keyword>
<reference key="1">
    <citation type="journal article" date="2003" name="Proc. Natl. Acad. Sci. U.S.A.">
        <title>The complete genome sequence of Mycobacterium bovis.</title>
        <authorList>
            <person name="Garnier T."/>
            <person name="Eiglmeier K."/>
            <person name="Camus J.-C."/>
            <person name="Medina N."/>
            <person name="Mansoor H."/>
            <person name="Pryor M."/>
            <person name="Duthoy S."/>
            <person name="Grondin S."/>
            <person name="Lacroix C."/>
            <person name="Monsempe C."/>
            <person name="Simon S."/>
            <person name="Harris B."/>
            <person name="Atkin R."/>
            <person name="Doggett J."/>
            <person name="Mayes R."/>
            <person name="Keating L."/>
            <person name="Wheeler P.R."/>
            <person name="Parkhill J."/>
            <person name="Barrell B.G."/>
            <person name="Cole S.T."/>
            <person name="Gordon S.V."/>
            <person name="Hewinson R.G."/>
        </authorList>
    </citation>
    <scope>NUCLEOTIDE SEQUENCE [LARGE SCALE GENOMIC DNA]</scope>
    <source>
        <strain>ATCC BAA-935 / AF2122/97</strain>
    </source>
</reference>
<reference key="2">
    <citation type="journal article" date="2017" name="Genome Announc.">
        <title>Updated reference genome sequence and annotation of Mycobacterium bovis AF2122/97.</title>
        <authorList>
            <person name="Malone K.M."/>
            <person name="Farrell D."/>
            <person name="Stuber T.P."/>
            <person name="Schubert O.T."/>
            <person name="Aebersold R."/>
            <person name="Robbe-Austerman S."/>
            <person name="Gordon S.V."/>
        </authorList>
    </citation>
    <scope>NUCLEOTIDE SEQUENCE [LARGE SCALE GENOMIC DNA]</scope>
    <scope>GENOME REANNOTATION</scope>
    <source>
        <strain>ATCC BAA-935 / AF2122/97</strain>
    </source>
</reference>
<dbReference type="EMBL" id="LT708304">
    <property type="protein sequence ID" value="SIU00100.1"/>
    <property type="molecule type" value="Genomic_DNA"/>
</dbReference>
<dbReference type="RefSeq" id="NP_855149.1">
    <property type="nucleotide sequence ID" value="NC_002945.3"/>
</dbReference>
<dbReference type="SMR" id="P59973"/>
<dbReference type="KEGG" id="mbo:BQ2027_MB1497"/>
<dbReference type="PATRIC" id="fig|233413.5.peg.1638"/>
<dbReference type="Proteomes" id="UP000001419">
    <property type="component" value="Chromosome"/>
</dbReference>
<dbReference type="GO" id="GO:0016226">
    <property type="term" value="P:iron-sulfur cluster assembly"/>
    <property type="evidence" value="ECO:0007669"/>
    <property type="project" value="InterPro"/>
</dbReference>
<dbReference type="InterPro" id="IPR055346">
    <property type="entry name" value="Fe-S_cluster_assembly_SufBD"/>
</dbReference>
<dbReference type="InterPro" id="IPR000825">
    <property type="entry name" value="SUF_FeS_clus_asmbl_SufBD_core"/>
</dbReference>
<dbReference type="InterPro" id="IPR037284">
    <property type="entry name" value="SUF_FeS_clus_asmbl_SufBD_sf"/>
</dbReference>
<dbReference type="InterPro" id="IPR011542">
    <property type="entry name" value="SUF_FeS_clus_asmbl_SufD"/>
</dbReference>
<dbReference type="NCBIfam" id="TIGR01981">
    <property type="entry name" value="sufD"/>
    <property type="match status" value="1"/>
</dbReference>
<dbReference type="PANTHER" id="PTHR43575">
    <property type="entry name" value="PROTEIN ABCI7, CHLOROPLASTIC"/>
    <property type="match status" value="1"/>
</dbReference>
<dbReference type="PANTHER" id="PTHR43575:SF1">
    <property type="entry name" value="PROTEIN ABCI7, CHLOROPLASTIC"/>
    <property type="match status" value="1"/>
</dbReference>
<dbReference type="Pfam" id="PF01458">
    <property type="entry name" value="SUFBD_core"/>
    <property type="match status" value="1"/>
</dbReference>
<dbReference type="SUPFAM" id="SSF101960">
    <property type="entry name" value="Stabilizer of iron transporter SufD"/>
    <property type="match status" value="1"/>
</dbReference>
<evidence type="ECO:0000305" key="1"/>
<proteinExistence type="inferred from homology"/>